<accession>P27163</accession>
<proteinExistence type="evidence at transcript level"/>
<evidence type="ECO:0000250" key="1"/>
<evidence type="ECO:0000255" key="2">
    <source>
        <dbReference type="PROSITE-ProRule" id="PRU00448"/>
    </source>
</evidence>
<evidence type="ECO:0000305" key="3"/>
<protein>
    <recommendedName>
        <fullName>Calmodulin-2</fullName>
        <shortName>CaM-2</shortName>
    </recommendedName>
</protein>
<name>CALM2_PETHY</name>
<organism>
    <name type="scientific">Petunia hybrida</name>
    <name type="common">Petunia</name>
    <dbReference type="NCBI Taxonomy" id="4102"/>
    <lineage>
        <taxon>Eukaryota</taxon>
        <taxon>Viridiplantae</taxon>
        <taxon>Streptophyta</taxon>
        <taxon>Embryophyta</taxon>
        <taxon>Tracheophyta</taxon>
        <taxon>Spermatophyta</taxon>
        <taxon>Magnoliopsida</taxon>
        <taxon>eudicotyledons</taxon>
        <taxon>Gunneridae</taxon>
        <taxon>Pentapetalae</taxon>
        <taxon>asterids</taxon>
        <taxon>lamiids</taxon>
        <taxon>Solanales</taxon>
        <taxon>Solanaceae</taxon>
        <taxon>Petunioideae</taxon>
        <taxon>Petunia</taxon>
    </lineage>
</organism>
<gene>
    <name type="primary">CAM72</name>
</gene>
<sequence>MAEQLTEEQIAEFKEAFSLFDKDGDGCITTKELGTVMRSLGQNPTEAELQDMISEVDADQNGTIDFPEFLNLMARKMKDTDSEEELKEAFKVFDKDQNGYISAADVRHVMTNLGEKLTDEEVDEMIREADMDGDGQVNYEEFVRMMLAK</sequence>
<reference key="1">
    <citation type="submission" date="1991-10" db="EMBL/GenBank/DDBJ databases">
        <title>Molecular characterization of petunia cDNAs encoding calmodulins and a calmodulin-related protein.</title>
        <authorList>
            <person name="Chua N.H."/>
            <person name="Carlenor E."/>
            <person name="Fromm H."/>
        </authorList>
    </citation>
    <scope>NUCLEOTIDE SEQUENCE [MRNA]</scope>
</reference>
<dbReference type="EMBL" id="M80832">
    <property type="protein sequence ID" value="AAA33725.1"/>
    <property type="molecule type" value="mRNA"/>
</dbReference>
<dbReference type="PIR" id="S70767">
    <property type="entry name" value="S70767"/>
</dbReference>
<dbReference type="SMR" id="P27163"/>
<dbReference type="GO" id="GO:0016460">
    <property type="term" value="C:myosin II complex"/>
    <property type="evidence" value="ECO:0007669"/>
    <property type="project" value="TreeGrafter"/>
</dbReference>
<dbReference type="GO" id="GO:0005509">
    <property type="term" value="F:calcium ion binding"/>
    <property type="evidence" value="ECO:0007669"/>
    <property type="project" value="InterPro"/>
</dbReference>
<dbReference type="CDD" id="cd00051">
    <property type="entry name" value="EFh"/>
    <property type="match status" value="2"/>
</dbReference>
<dbReference type="FunFam" id="1.10.238.10:FF:000034">
    <property type="entry name" value="Calmodulin"/>
    <property type="match status" value="1"/>
</dbReference>
<dbReference type="FunFam" id="1.10.238.10:FF:000042">
    <property type="entry name" value="Calmodulin"/>
    <property type="match status" value="1"/>
</dbReference>
<dbReference type="Gene3D" id="1.10.238.10">
    <property type="entry name" value="EF-hand"/>
    <property type="match status" value="3"/>
</dbReference>
<dbReference type="InterPro" id="IPR050230">
    <property type="entry name" value="CALM/Myosin/TropC-like"/>
</dbReference>
<dbReference type="InterPro" id="IPR011992">
    <property type="entry name" value="EF-hand-dom_pair"/>
</dbReference>
<dbReference type="InterPro" id="IPR018247">
    <property type="entry name" value="EF_Hand_1_Ca_BS"/>
</dbReference>
<dbReference type="InterPro" id="IPR002048">
    <property type="entry name" value="EF_hand_dom"/>
</dbReference>
<dbReference type="PANTHER" id="PTHR23048:SF0">
    <property type="entry name" value="CALMODULIN LIKE 3"/>
    <property type="match status" value="1"/>
</dbReference>
<dbReference type="PANTHER" id="PTHR23048">
    <property type="entry name" value="MYOSIN LIGHT CHAIN 1, 3"/>
    <property type="match status" value="1"/>
</dbReference>
<dbReference type="Pfam" id="PF13499">
    <property type="entry name" value="EF-hand_7"/>
    <property type="match status" value="2"/>
</dbReference>
<dbReference type="SMART" id="SM00054">
    <property type="entry name" value="EFh"/>
    <property type="match status" value="4"/>
</dbReference>
<dbReference type="SUPFAM" id="SSF47473">
    <property type="entry name" value="EF-hand"/>
    <property type="match status" value="1"/>
</dbReference>
<dbReference type="PROSITE" id="PS00018">
    <property type="entry name" value="EF_HAND_1"/>
    <property type="match status" value="4"/>
</dbReference>
<dbReference type="PROSITE" id="PS50222">
    <property type="entry name" value="EF_HAND_2"/>
    <property type="match status" value="4"/>
</dbReference>
<comment type="function">
    <text>Calmodulin mediates the control of a large number of enzymes, ion channels and other proteins by Ca(2+). Among the enzymes to be stimulated by the calmodulin-Ca(2+) complex are a number of protein kinases and phosphatases.</text>
</comment>
<comment type="miscellaneous">
    <text>This protein has four functional calcium-binding sites.</text>
</comment>
<comment type="similarity">
    <text evidence="3">Belongs to the calmodulin family.</text>
</comment>
<keyword id="KW-0007">Acetylation</keyword>
<keyword id="KW-0106">Calcium</keyword>
<keyword id="KW-0479">Metal-binding</keyword>
<keyword id="KW-0488">Methylation</keyword>
<keyword id="KW-0677">Repeat</keyword>
<feature type="initiator methionine" description="Removed" evidence="1">
    <location>
        <position position="1"/>
    </location>
</feature>
<feature type="chain" id="PRO_0000198300" description="Calmodulin-2">
    <location>
        <begin position="2"/>
        <end position="149"/>
    </location>
</feature>
<feature type="domain" description="EF-hand 1" evidence="2">
    <location>
        <begin position="8"/>
        <end position="43"/>
    </location>
</feature>
<feature type="domain" description="EF-hand 2" evidence="2">
    <location>
        <begin position="44"/>
        <end position="79"/>
    </location>
</feature>
<feature type="domain" description="EF-hand 3" evidence="2">
    <location>
        <begin position="81"/>
        <end position="116"/>
    </location>
</feature>
<feature type="domain" description="EF-hand 4" evidence="2">
    <location>
        <begin position="117"/>
        <end position="149"/>
    </location>
</feature>
<feature type="binding site" evidence="2">
    <location>
        <position position="21"/>
    </location>
    <ligand>
        <name>Ca(2+)</name>
        <dbReference type="ChEBI" id="CHEBI:29108"/>
        <label>1</label>
    </ligand>
</feature>
<feature type="binding site" evidence="2">
    <location>
        <position position="23"/>
    </location>
    <ligand>
        <name>Ca(2+)</name>
        <dbReference type="ChEBI" id="CHEBI:29108"/>
        <label>1</label>
    </ligand>
</feature>
<feature type="binding site" evidence="2">
    <location>
        <position position="25"/>
    </location>
    <ligand>
        <name>Ca(2+)</name>
        <dbReference type="ChEBI" id="CHEBI:29108"/>
        <label>1</label>
    </ligand>
</feature>
<feature type="binding site" evidence="2">
    <location>
        <position position="27"/>
    </location>
    <ligand>
        <name>Ca(2+)</name>
        <dbReference type="ChEBI" id="CHEBI:29108"/>
        <label>1</label>
    </ligand>
</feature>
<feature type="binding site" evidence="2">
    <location>
        <position position="32"/>
    </location>
    <ligand>
        <name>Ca(2+)</name>
        <dbReference type="ChEBI" id="CHEBI:29108"/>
        <label>1</label>
    </ligand>
</feature>
<feature type="binding site" evidence="2">
    <location>
        <position position="57"/>
    </location>
    <ligand>
        <name>Ca(2+)</name>
        <dbReference type="ChEBI" id="CHEBI:29108"/>
        <label>2</label>
    </ligand>
</feature>
<feature type="binding site" evidence="2">
    <location>
        <position position="59"/>
    </location>
    <ligand>
        <name>Ca(2+)</name>
        <dbReference type="ChEBI" id="CHEBI:29108"/>
        <label>2</label>
    </ligand>
</feature>
<feature type="binding site" evidence="2">
    <location>
        <position position="61"/>
    </location>
    <ligand>
        <name>Ca(2+)</name>
        <dbReference type="ChEBI" id="CHEBI:29108"/>
        <label>2</label>
    </ligand>
</feature>
<feature type="binding site" evidence="2">
    <location>
        <position position="63"/>
    </location>
    <ligand>
        <name>Ca(2+)</name>
        <dbReference type="ChEBI" id="CHEBI:29108"/>
        <label>2</label>
    </ligand>
</feature>
<feature type="binding site" evidence="2">
    <location>
        <position position="68"/>
    </location>
    <ligand>
        <name>Ca(2+)</name>
        <dbReference type="ChEBI" id="CHEBI:29108"/>
        <label>2</label>
    </ligand>
</feature>
<feature type="binding site" evidence="2">
    <location>
        <position position="94"/>
    </location>
    <ligand>
        <name>Ca(2+)</name>
        <dbReference type="ChEBI" id="CHEBI:29108"/>
        <label>3</label>
    </ligand>
</feature>
<feature type="binding site" evidence="2">
    <location>
        <position position="96"/>
    </location>
    <ligand>
        <name>Ca(2+)</name>
        <dbReference type="ChEBI" id="CHEBI:29108"/>
        <label>3</label>
    </ligand>
</feature>
<feature type="binding site" evidence="2">
    <location>
        <position position="98"/>
    </location>
    <ligand>
        <name>Ca(2+)</name>
        <dbReference type="ChEBI" id="CHEBI:29108"/>
        <label>3</label>
    </ligand>
</feature>
<feature type="binding site" evidence="2">
    <location>
        <position position="100"/>
    </location>
    <ligand>
        <name>Ca(2+)</name>
        <dbReference type="ChEBI" id="CHEBI:29108"/>
        <label>3</label>
    </ligand>
</feature>
<feature type="binding site" evidence="2">
    <location>
        <position position="105"/>
    </location>
    <ligand>
        <name>Ca(2+)</name>
        <dbReference type="ChEBI" id="CHEBI:29108"/>
        <label>3</label>
    </ligand>
</feature>
<feature type="binding site" evidence="2">
    <location>
        <position position="130"/>
    </location>
    <ligand>
        <name>Ca(2+)</name>
        <dbReference type="ChEBI" id="CHEBI:29108"/>
        <label>4</label>
    </ligand>
</feature>
<feature type="binding site" evidence="2">
    <location>
        <position position="132"/>
    </location>
    <ligand>
        <name>Ca(2+)</name>
        <dbReference type="ChEBI" id="CHEBI:29108"/>
        <label>4</label>
    </ligand>
</feature>
<feature type="binding site" evidence="2">
    <location>
        <position position="134"/>
    </location>
    <ligand>
        <name>Ca(2+)</name>
        <dbReference type="ChEBI" id="CHEBI:29108"/>
        <label>4</label>
    </ligand>
</feature>
<feature type="binding site" evidence="2">
    <location>
        <position position="136"/>
    </location>
    <ligand>
        <name>Ca(2+)</name>
        <dbReference type="ChEBI" id="CHEBI:29108"/>
        <label>4</label>
    </ligand>
</feature>
<feature type="binding site" evidence="2">
    <location>
        <position position="141"/>
    </location>
    <ligand>
        <name>Ca(2+)</name>
        <dbReference type="ChEBI" id="CHEBI:29108"/>
        <label>4</label>
    </ligand>
</feature>
<feature type="modified residue" description="N-acetylalanine" evidence="1">
    <location>
        <position position="2"/>
    </location>
</feature>
<feature type="modified residue" description="N6,N6,N6-trimethyllysine" evidence="1">
    <location>
        <position position="116"/>
    </location>
</feature>